<evidence type="ECO:0000255" key="1">
    <source>
        <dbReference type="HAMAP-Rule" id="MF_00658"/>
    </source>
</evidence>
<proteinExistence type="inferred from homology"/>
<name>RLMH_ECO45</name>
<accession>B7MFQ9</accession>
<comment type="function">
    <text evidence="1">Specifically methylates the pseudouridine at position 1915 (m3Psi1915) in 23S rRNA.</text>
</comment>
<comment type="catalytic activity">
    <reaction evidence="1">
        <text>pseudouridine(1915) in 23S rRNA + S-adenosyl-L-methionine = N(3)-methylpseudouridine(1915) in 23S rRNA + S-adenosyl-L-homocysteine + H(+)</text>
        <dbReference type="Rhea" id="RHEA:42752"/>
        <dbReference type="Rhea" id="RHEA-COMP:10221"/>
        <dbReference type="Rhea" id="RHEA-COMP:10222"/>
        <dbReference type="ChEBI" id="CHEBI:15378"/>
        <dbReference type="ChEBI" id="CHEBI:57856"/>
        <dbReference type="ChEBI" id="CHEBI:59789"/>
        <dbReference type="ChEBI" id="CHEBI:65314"/>
        <dbReference type="ChEBI" id="CHEBI:74486"/>
        <dbReference type="EC" id="2.1.1.177"/>
    </reaction>
</comment>
<comment type="subunit">
    <text evidence="1">Homodimer.</text>
</comment>
<comment type="subcellular location">
    <subcellularLocation>
        <location evidence="1">Cytoplasm</location>
    </subcellularLocation>
</comment>
<comment type="similarity">
    <text evidence="1">Belongs to the RNA methyltransferase RlmH family.</text>
</comment>
<feature type="chain" id="PRO_1000131229" description="Ribosomal RNA large subunit methyltransferase H">
    <location>
        <begin position="1"/>
        <end position="155"/>
    </location>
</feature>
<feature type="binding site" evidence="1">
    <location>
        <position position="72"/>
    </location>
    <ligand>
        <name>S-adenosyl-L-methionine</name>
        <dbReference type="ChEBI" id="CHEBI:59789"/>
    </ligand>
</feature>
<feature type="binding site" evidence="1">
    <location>
        <position position="103"/>
    </location>
    <ligand>
        <name>S-adenosyl-L-methionine</name>
        <dbReference type="ChEBI" id="CHEBI:59789"/>
    </ligand>
</feature>
<feature type="binding site" evidence="1">
    <location>
        <begin position="122"/>
        <end position="127"/>
    </location>
    <ligand>
        <name>S-adenosyl-L-methionine</name>
        <dbReference type="ChEBI" id="CHEBI:59789"/>
    </ligand>
</feature>
<gene>
    <name evidence="1" type="primary">rlmH</name>
    <name type="ordered locus">ECS88_0678</name>
</gene>
<organism>
    <name type="scientific">Escherichia coli O45:K1 (strain S88 / ExPEC)</name>
    <dbReference type="NCBI Taxonomy" id="585035"/>
    <lineage>
        <taxon>Bacteria</taxon>
        <taxon>Pseudomonadati</taxon>
        <taxon>Pseudomonadota</taxon>
        <taxon>Gammaproteobacteria</taxon>
        <taxon>Enterobacterales</taxon>
        <taxon>Enterobacteriaceae</taxon>
        <taxon>Escherichia</taxon>
    </lineage>
</organism>
<reference key="1">
    <citation type="journal article" date="2009" name="PLoS Genet.">
        <title>Organised genome dynamics in the Escherichia coli species results in highly diverse adaptive paths.</title>
        <authorList>
            <person name="Touchon M."/>
            <person name="Hoede C."/>
            <person name="Tenaillon O."/>
            <person name="Barbe V."/>
            <person name="Baeriswyl S."/>
            <person name="Bidet P."/>
            <person name="Bingen E."/>
            <person name="Bonacorsi S."/>
            <person name="Bouchier C."/>
            <person name="Bouvet O."/>
            <person name="Calteau A."/>
            <person name="Chiapello H."/>
            <person name="Clermont O."/>
            <person name="Cruveiller S."/>
            <person name="Danchin A."/>
            <person name="Diard M."/>
            <person name="Dossat C."/>
            <person name="Karoui M.E."/>
            <person name="Frapy E."/>
            <person name="Garry L."/>
            <person name="Ghigo J.M."/>
            <person name="Gilles A.M."/>
            <person name="Johnson J."/>
            <person name="Le Bouguenec C."/>
            <person name="Lescat M."/>
            <person name="Mangenot S."/>
            <person name="Martinez-Jehanne V."/>
            <person name="Matic I."/>
            <person name="Nassif X."/>
            <person name="Oztas S."/>
            <person name="Petit M.A."/>
            <person name="Pichon C."/>
            <person name="Rouy Z."/>
            <person name="Ruf C.S."/>
            <person name="Schneider D."/>
            <person name="Tourret J."/>
            <person name="Vacherie B."/>
            <person name="Vallenet D."/>
            <person name="Medigue C."/>
            <person name="Rocha E.P.C."/>
            <person name="Denamur E."/>
        </authorList>
    </citation>
    <scope>NUCLEOTIDE SEQUENCE [LARGE SCALE GENOMIC DNA]</scope>
    <source>
        <strain>S88 / ExPEC</strain>
    </source>
</reference>
<sequence>MKLQLVAVGTKMPDWVQTGFTEYLRRFPKDMPFELIEIPAGKRGKNADIKRILDKEGEQMLAAAGKNRIVTLDIPGKPWDTPQLAAELERWKLDGRDVSLLIGGPEGLSPACKAAAEQSWSLSALTLPHPLVRVLVAESLYRAWSITTNHPYHRE</sequence>
<protein>
    <recommendedName>
        <fullName evidence="1">Ribosomal RNA large subunit methyltransferase H</fullName>
        <ecNumber evidence="1">2.1.1.177</ecNumber>
    </recommendedName>
    <alternativeName>
        <fullName evidence="1">23S rRNA (pseudouridine1915-N3)-methyltransferase</fullName>
    </alternativeName>
    <alternativeName>
        <fullName evidence="1">23S rRNA m3Psi1915 methyltransferase</fullName>
    </alternativeName>
    <alternativeName>
        <fullName evidence="1">rRNA (pseudouridine-N3-)-methyltransferase RlmH</fullName>
    </alternativeName>
</protein>
<dbReference type="EC" id="2.1.1.177" evidence="1"/>
<dbReference type="EMBL" id="CU928161">
    <property type="protein sequence ID" value="CAR02018.1"/>
    <property type="molecule type" value="Genomic_DNA"/>
</dbReference>
<dbReference type="RefSeq" id="WP_000776104.1">
    <property type="nucleotide sequence ID" value="NC_011742.1"/>
</dbReference>
<dbReference type="SMR" id="B7MFQ9"/>
<dbReference type="GeneID" id="93776846"/>
<dbReference type="KEGG" id="ecz:ECS88_0678"/>
<dbReference type="HOGENOM" id="CLU_100552_1_0_6"/>
<dbReference type="Proteomes" id="UP000000747">
    <property type="component" value="Chromosome"/>
</dbReference>
<dbReference type="GO" id="GO:0005737">
    <property type="term" value="C:cytoplasm"/>
    <property type="evidence" value="ECO:0007669"/>
    <property type="project" value="UniProtKB-SubCell"/>
</dbReference>
<dbReference type="GO" id="GO:0070038">
    <property type="term" value="F:rRNA (pseudouridine-N3-)-methyltransferase activity"/>
    <property type="evidence" value="ECO:0007669"/>
    <property type="project" value="UniProtKB-UniRule"/>
</dbReference>
<dbReference type="CDD" id="cd18081">
    <property type="entry name" value="RlmH-like"/>
    <property type="match status" value="1"/>
</dbReference>
<dbReference type="FunFam" id="3.40.1280.10:FF:000004">
    <property type="entry name" value="Ribosomal RNA large subunit methyltransferase H"/>
    <property type="match status" value="1"/>
</dbReference>
<dbReference type="Gene3D" id="3.40.1280.10">
    <property type="match status" value="1"/>
</dbReference>
<dbReference type="HAMAP" id="MF_00658">
    <property type="entry name" value="23SrRNA_methyltr_H"/>
    <property type="match status" value="1"/>
</dbReference>
<dbReference type="InterPro" id="IPR029028">
    <property type="entry name" value="Alpha/beta_knot_MTases"/>
</dbReference>
<dbReference type="InterPro" id="IPR003742">
    <property type="entry name" value="RlmH-like"/>
</dbReference>
<dbReference type="InterPro" id="IPR029026">
    <property type="entry name" value="tRNA_m1G_MTases_N"/>
</dbReference>
<dbReference type="NCBIfam" id="NF000984">
    <property type="entry name" value="PRK00103.1-1"/>
    <property type="match status" value="1"/>
</dbReference>
<dbReference type="NCBIfam" id="NF000986">
    <property type="entry name" value="PRK00103.1-4"/>
    <property type="match status" value="1"/>
</dbReference>
<dbReference type="NCBIfam" id="TIGR00246">
    <property type="entry name" value="tRNA_RlmH_YbeA"/>
    <property type="match status" value="1"/>
</dbReference>
<dbReference type="PANTHER" id="PTHR33603">
    <property type="entry name" value="METHYLTRANSFERASE"/>
    <property type="match status" value="1"/>
</dbReference>
<dbReference type="PANTHER" id="PTHR33603:SF1">
    <property type="entry name" value="RIBOSOMAL RNA LARGE SUBUNIT METHYLTRANSFERASE H"/>
    <property type="match status" value="1"/>
</dbReference>
<dbReference type="Pfam" id="PF02590">
    <property type="entry name" value="SPOUT_MTase"/>
    <property type="match status" value="1"/>
</dbReference>
<dbReference type="PIRSF" id="PIRSF004505">
    <property type="entry name" value="MT_bac"/>
    <property type="match status" value="1"/>
</dbReference>
<dbReference type="SUPFAM" id="SSF75217">
    <property type="entry name" value="alpha/beta knot"/>
    <property type="match status" value="1"/>
</dbReference>
<keyword id="KW-0963">Cytoplasm</keyword>
<keyword id="KW-0489">Methyltransferase</keyword>
<keyword id="KW-1185">Reference proteome</keyword>
<keyword id="KW-0698">rRNA processing</keyword>
<keyword id="KW-0949">S-adenosyl-L-methionine</keyword>
<keyword id="KW-0808">Transferase</keyword>